<proteinExistence type="evidence at protein level"/>
<protein>
    <recommendedName>
        <fullName>Intestinal-type alkaline phosphatase 2</fullName>
        <shortName>IAP-2</shortName>
        <shortName>Intestinal alkaline phosphatase 2</shortName>
        <ecNumber>3.1.3.1</ecNumber>
    </recommendedName>
    <alternativeName>
        <fullName>Intestinal alkaline phosphatase II</fullName>
        <shortName>IAP-II</shortName>
    </alternativeName>
</protein>
<name>PPBI2_RAT</name>
<keyword id="KW-0106">Calcium</keyword>
<keyword id="KW-1003">Cell membrane</keyword>
<keyword id="KW-0903">Direct protein sequencing</keyword>
<keyword id="KW-1015">Disulfide bond</keyword>
<keyword id="KW-0325">Glycoprotein</keyword>
<keyword id="KW-0336">GPI-anchor</keyword>
<keyword id="KW-0378">Hydrolase</keyword>
<keyword id="KW-0449">Lipoprotein</keyword>
<keyword id="KW-0460">Magnesium</keyword>
<keyword id="KW-0472">Membrane</keyword>
<keyword id="KW-0479">Metal-binding</keyword>
<keyword id="KW-1185">Reference proteome</keyword>
<keyword id="KW-0732">Signal</keyword>
<keyword id="KW-0862">Zinc</keyword>
<sequence length="551" mass="59797">MQGAWVLLLLGFRLQLSLSVIPVEEENPAFWTQKAADALNVAKKLQPIQTSAKNLIIFLGDGMGVATVTATRILKGQLEGNLGPETPLAMDHFPYMALSKTYSVDRQVPDSASTATAYLCGVKTNYKTIGVSAAARFDQCNTTFGNEVLSVMYRAKKAGKSVGVGDHTRVQHASPAGTYVHTVTSNWYGDADMPALPLQEGCKDIATQLISNMDINVILGGGRKYMFPAGTPDPEYPNDVNETGTRLDGKNLVQEWLSKHQGSQYVWNRQELIQKSLDPSVTYLMGLFEPVDTKFEIQRDPLMDPSLKDMTEAALHVLSRNPKGFYLFVEGGRIDRGHHLGTAYLALTEAVMFDSAIERASLQASEQDTLTIVTADHSHVFSFGGYTLRGTSIFGLAPLNALDGKPYTSILYGNGPGYVGTGERPNVTDAESHDPSYQQQAAVPVKSETTVGKDVAIFARGPQAHLLHGVQEQNYIAHVMAFAGCLEPYTDCGLAPPADENRPTTPVQNSTTTTTTTTTTTTTTTTTRVQNSASSLGPATAPLAWHYWPRR</sequence>
<dbReference type="EC" id="3.1.3.1"/>
<dbReference type="EMBL" id="S66545">
    <property type="protein sequence ID" value="AAB20378.2"/>
    <property type="molecule type" value="mRNA"/>
</dbReference>
<dbReference type="PIR" id="B56888">
    <property type="entry name" value="B56888"/>
</dbReference>
<dbReference type="PIR" id="S18408">
    <property type="entry name" value="S18408"/>
</dbReference>
<dbReference type="SMR" id="P51740"/>
<dbReference type="FunCoup" id="P51740">
    <property type="interactions" value="55"/>
</dbReference>
<dbReference type="STRING" id="10116.ENSRNOP00000071091"/>
<dbReference type="GlyGen" id="P51740">
    <property type="glycosylation" value="4 sites"/>
</dbReference>
<dbReference type="iPTMnet" id="P51740"/>
<dbReference type="PhosphoSitePlus" id="P51740"/>
<dbReference type="PaxDb" id="10116-ENSRNOP00000066949"/>
<dbReference type="UCSC" id="RGD:621650">
    <property type="organism name" value="rat"/>
</dbReference>
<dbReference type="AGR" id="RGD:621650"/>
<dbReference type="eggNOG" id="KOG4126">
    <property type="taxonomic scope" value="Eukaryota"/>
</dbReference>
<dbReference type="InParanoid" id="P51740"/>
<dbReference type="PhylomeDB" id="P51740"/>
<dbReference type="SABIO-RK" id="P51740"/>
<dbReference type="Proteomes" id="UP000002494">
    <property type="component" value="Unplaced"/>
</dbReference>
<dbReference type="GO" id="GO:0005886">
    <property type="term" value="C:plasma membrane"/>
    <property type="evidence" value="ECO:0000318"/>
    <property type="project" value="GO_Central"/>
</dbReference>
<dbReference type="GO" id="GO:0098552">
    <property type="term" value="C:side of membrane"/>
    <property type="evidence" value="ECO:0007669"/>
    <property type="project" value="UniProtKB-KW"/>
</dbReference>
<dbReference type="GO" id="GO:0004035">
    <property type="term" value="F:alkaline phosphatase activity"/>
    <property type="evidence" value="ECO:0000318"/>
    <property type="project" value="GO_Central"/>
</dbReference>
<dbReference type="GO" id="GO:0046872">
    <property type="term" value="F:metal ion binding"/>
    <property type="evidence" value="ECO:0007669"/>
    <property type="project" value="UniProtKB-KW"/>
</dbReference>
<dbReference type="CDD" id="cd16012">
    <property type="entry name" value="ALP"/>
    <property type="match status" value="1"/>
</dbReference>
<dbReference type="FunFam" id="3.40.720.10:FF:000008">
    <property type="entry name" value="Alkaline phosphatase"/>
    <property type="match status" value="1"/>
</dbReference>
<dbReference type="Gene3D" id="3.40.720.10">
    <property type="entry name" value="Alkaline Phosphatase, subunit A"/>
    <property type="match status" value="1"/>
</dbReference>
<dbReference type="InterPro" id="IPR001952">
    <property type="entry name" value="Alkaline_phosphatase"/>
</dbReference>
<dbReference type="InterPro" id="IPR018299">
    <property type="entry name" value="Alkaline_phosphatase_AS"/>
</dbReference>
<dbReference type="InterPro" id="IPR017850">
    <property type="entry name" value="Alkaline_phosphatase_core_sf"/>
</dbReference>
<dbReference type="PANTHER" id="PTHR11596">
    <property type="entry name" value="ALKALINE PHOSPHATASE"/>
    <property type="match status" value="1"/>
</dbReference>
<dbReference type="PANTHER" id="PTHR11596:SF43">
    <property type="entry name" value="INTESTINAL-TYPE ALKALINE PHOSPHATASE"/>
    <property type="match status" value="1"/>
</dbReference>
<dbReference type="Pfam" id="PF00245">
    <property type="entry name" value="Alk_phosphatase"/>
    <property type="match status" value="1"/>
</dbReference>
<dbReference type="PRINTS" id="PR00113">
    <property type="entry name" value="ALKPHPHTASE"/>
</dbReference>
<dbReference type="SMART" id="SM00098">
    <property type="entry name" value="alkPPc"/>
    <property type="match status" value="1"/>
</dbReference>
<dbReference type="SUPFAM" id="SSF53649">
    <property type="entry name" value="Alkaline phosphatase-like"/>
    <property type="match status" value="1"/>
</dbReference>
<dbReference type="PROSITE" id="PS00123">
    <property type="entry name" value="ALKALINE_PHOSPHATASE"/>
    <property type="match status" value="1"/>
</dbReference>
<organism>
    <name type="scientific">Rattus norvegicus</name>
    <name type="common">Rat</name>
    <dbReference type="NCBI Taxonomy" id="10116"/>
    <lineage>
        <taxon>Eukaryota</taxon>
        <taxon>Metazoa</taxon>
        <taxon>Chordata</taxon>
        <taxon>Craniata</taxon>
        <taxon>Vertebrata</taxon>
        <taxon>Euteleostomi</taxon>
        <taxon>Mammalia</taxon>
        <taxon>Eutheria</taxon>
        <taxon>Euarchontoglires</taxon>
        <taxon>Glires</taxon>
        <taxon>Rodentia</taxon>
        <taxon>Myomorpha</taxon>
        <taxon>Muroidea</taxon>
        <taxon>Muridae</taxon>
        <taxon>Murinae</taxon>
        <taxon>Rattus</taxon>
    </lineage>
</organism>
<reference key="1">
    <citation type="journal article" date="1991" name="Biochim. Biophys. Acta">
        <title>Isolation of a mRNA that encodes a putative intestinal alkaline phosphatase regulated by 1,25-dihydroxyvitamin D-3.</title>
        <authorList>
            <person name="Strom M."/>
            <person name="Krisinger J."/>
            <person name="Deluca H.F."/>
        </authorList>
    </citation>
    <scope>NUCLEOTIDE SEQUENCE [MRNA]</scope>
</reference>
<reference key="2">
    <citation type="journal article" date="1992" name="Clin. Chem.">
        <title>The two mRNAs encoding rat intestinal alkaline phosphatase represent two distinct nucleotide sequences.</title>
        <authorList>
            <person name="Engle M.J."/>
            <person name="Aleprs D.H."/>
        </authorList>
    </citation>
    <scope>PARTIAL NUCLEOTIDE SEQUENCE</scope>
    <source>
        <strain>Sprague-Dawley</strain>
    </source>
</reference>
<reference key="3">
    <citation type="journal article" date="1991" name="Biochim. Biophys. Acta">
        <title>Purification and characterization of phytase from rat intestinal mucosa.</title>
        <authorList>
            <person name="Yang W.-J."/>
            <person name="Matsuda Y."/>
            <person name="Sano S."/>
            <person name="Masutani H."/>
            <person name="Nakagawa H."/>
        </authorList>
    </citation>
    <scope>PROTEIN SEQUENCE OF 20-29</scope>
    <scope>VARIANT VAL-29</scope>
</reference>
<reference key="4">
    <citation type="journal article" date="1995" name="J. Biol. Chem.">
        <title>Two rat intestinal alkaline phosphatase isoforms with different carboxyl-terminal peptides are both membrane-bound by a glycan phosphatidylinositol linkage.</title>
        <authorList>
            <person name="Engle M.J."/>
            <person name="Mahmood A."/>
            <person name="Alpers D.H."/>
        </authorList>
    </citation>
    <scope>GPI-ANCHOR</scope>
</reference>
<accession>P51740</accession>
<comment type="function">
    <text evidence="2">Alkaline phosphatase that can hydrolyze various phosphate compounds.</text>
</comment>
<comment type="catalytic activity">
    <reaction evidence="2 4">
        <text>a phosphate monoester + H2O = an alcohol + phosphate</text>
        <dbReference type="Rhea" id="RHEA:15017"/>
        <dbReference type="ChEBI" id="CHEBI:15377"/>
        <dbReference type="ChEBI" id="CHEBI:30879"/>
        <dbReference type="ChEBI" id="CHEBI:43474"/>
        <dbReference type="ChEBI" id="CHEBI:67140"/>
        <dbReference type="EC" id="3.1.3.1"/>
    </reaction>
</comment>
<comment type="cofactor">
    <cofactor evidence="2">
        <name>Mg(2+)</name>
        <dbReference type="ChEBI" id="CHEBI:18420"/>
    </cofactor>
    <text evidence="2">Binds 1 Mg(2+) ion.</text>
</comment>
<comment type="cofactor">
    <cofactor evidence="2">
        <name>Zn(2+)</name>
        <dbReference type="ChEBI" id="CHEBI:29105"/>
    </cofactor>
    <text evidence="2">Binds 2 Zn(2+) ions.</text>
</comment>
<comment type="cofactor">
    <cofactor evidence="1">
        <name>Ca(2+)</name>
        <dbReference type="ChEBI" id="CHEBI:29108"/>
    </cofactor>
</comment>
<comment type="subunit">
    <text evidence="2">Homodimer.</text>
</comment>
<comment type="subcellular location">
    <subcellularLocation>
        <location evidence="2">Cell membrane</location>
        <topology evidence="7">Lipid-anchor</topology>
        <topology evidence="7">GPI-anchor</topology>
    </subcellularLocation>
</comment>
<comment type="miscellaneous">
    <text>In most mammals there are four different isozymes: placental (ALPP), germ cell (ALPG), intestinal (ALPI) and tissue non-specific (liver/bone/kidney) (ALPL/TNAP). Rat has two genes for the intestinal isozyme.</text>
</comment>
<comment type="similarity">
    <text evidence="8">Belongs to the alkaline phosphatase family.</text>
</comment>
<feature type="signal peptide" evidence="6">
    <location>
        <begin position="1"/>
        <end position="19"/>
    </location>
</feature>
<feature type="chain" id="PRO_0000024043" description="Intestinal-type alkaline phosphatase 2">
    <location>
        <begin position="20"/>
        <end position="531"/>
    </location>
</feature>
<feature type="propeptide" id="PRO_0000024044" description="Removed in mature form" evidence="3">
    <location>
        <begin position="532"/>
        <end position="551"/>
    </location>
</feature>
<feature type="region of interest" description="Disordered" evidence="5">
    <location>
        <begin position="496"/>
        <end position="537"/>
    </location>
</feature>
<feature type="compositionally biased region" description="Low complexity" evidence="5">
    <location>
        <begin position="511"/>
        <end position="527"/>
    </location>
</feature>
<feature type="compositionally biased region" description="Polar residues" evidence="5">
    <location>
        <begin position="528"/>
        <end position="537"/>
    </location>
</feature>
<feature type="active site" description="Phosphoserine intermediate" evidence="4">
    <location>
        <position position="111"/>
    </location>
</feature>
<feature type="binding site" evidence="2">
    <location>
        <position position="61"/>
    </location>
    <ligand>
        <name>Mg(2+)</name>
        <dbReference type="ChEBI" id="CHEBI:18420"/>
    </ligand>
</feature>
<feature type="binding site" evidence="2">
    <location>
        <position position="61"/>
    </location>
    <ligand>
        <name>Zn(2+)</name>
        <dbReference type="ChEBI" id="CHEBI:29105"/>
        <label>1</label>
    </ligand>
</feature>
<feature type="binding site" evidence="2">
    <location>
        <position position="111"/>
    </location>
    <ligand>
        <name>Zn(2+)</name>
        <dbReference type="ChEBI" id="CHEBI:29105"/>
        <label>1</label>
    </ligand>
</feature>
<feature type="binding site" evidence="2">
    <location>
        <position position="174"/>
    </location>
    <ligand>
        <name>Mg(2+)</name>
        <dbReference type="ChEBI" id="CHEBI:18420"/>
    </ligand>
</feature>
<feature type="binding site" evidence="1">
    <location>
        <position position="235"/>
    </location>
    <ligand>
        <name>Ca(2+)</name>
        <dbReference type="ChEBI" id="CHEBI:29108"/>
    </ligand>
</feature>
<feature type="binding site" evidence="1">
    <location>
        <position position="288"/>
    </location>
    <ligand>
        <name>Ca(2+)</name>
        <dbReference type="ChEBI" id="CHEBI:29108"/>
    </ligand>
</feature>
<feature type="binding site" evidence="1">
    <location>
        <position position="289"/>
    </location>
    <ligand>
        <name>Ca(2+)</name>
        <dbReference type="ChEBI" id="CHEBI:29108"/>
    </ligand>
</feature>
<feature type="binding site" evidence="1">
    <location>
        <position position="304"/>
    </location>
    <ligand>
        <name>Ca(2+)</name>
        <dbReference type="ChEBI" id="CHEBI:29108"/>
    </ligand>
</feature>
<feature type="binding site" evidence="2">
    <location>
        <position position="330"/>
    </location>
    <ligand>
        <name>Mg(2+)</name>
        <dbReference type="ChEBI" id="CHEBI:18420"/>
    </ligand>
</feature>
<feature type="binding site" evidence="2">
    <location>
        <position position="335"/>
    </location>
    <ligand>
        <name>Zn(2+)</name>
        <dbReference type="ChEBI" id="CHEBI:29105"/>
        <label>2</label>
    </ligand>
</feature>
<feature type="binding site" evidence="2">
    <location>
        <position position="339"/>
    </location>
    <ligand>
        <name>Zn(2+)</name>
        <dbReference type="ChEBI" id="CHEBI:29105"/>
        <label>2</label>
    </ligand>
</feature>
<feature type="binding site" evidence="2">
    <location>
        <position position="376"/>
    </location>
    <ligand>
        <name>Zn(2+)</name>
        <dbReference type="ChEBI" id="CHEBI:29105"/>
        <label>1</label>
    </ligand>
</feature>
<feature type="binding site" evidence="2">
    <location>
        <position position="377"/>
    </location>
    <ligand>
        <name>Zn(2+)</name>
        <dbReference type="ChEBI" id="CHEBI:29105"/>
        <label>1</label>
    </ligand>
</feature>
<feature type="lipid moiety-binding region" description="GPI-anchor amidated asparagine" evidence="3">
    <location>
        <position position="531"/>
    </location>
</feature>
<feature type="glycosylation site" description="N-linked (GlcNAc...) asparagine" evidence="3">
    <location>
        <position position="141"/>
    </location>
</feature>
<feature type="glycosylation site" description="N-linked (GlcNAc...) asparagine" evidence="3">
    <location>
        <position position="241"/>
    </location>
</feature>
<feature type="glycosylation site" description="N-linked (GlcNAc...) asparagine" evidence="3">
    <location>
        <position position="426"/>
    </location>
</feature>
<feature type="glycosylation site" description="N-linked (GlcNAc...) asparagine" evidence="3">
    <location>
        <position position="509"/>
    </location>
</feature>
<feature type="disulfide bond" evidence="2">
    <location>
        <begin position="140"/>
        <end position="202"/>
    </location>
</feature>
<feature type="disulfide bond" evidence="2">
    <location>
        <begin position="485"/>
        <end position="492"/>
    </location>
</feature>
<feature type="sequence variant" evidence="6">
    <original>A</original>
    <variation>V</variation>
    <location>
        <position position="29"/>
    </location>
</feature>
<evidence type="ECO:0000250" key="1">
    <source>
        <dbReference type="UniProtKB" id="P05186"/>
    </source>
</evidence>
<evidence type="ECO:0000250" key="2">
    <source>
        <dbReference type="UniProtKB" id="P15693"/>
    </source>
</evidence>
<evidence type="ECO:0000255" key="3"/>
<evidence type="ECO:0000255" key="4">
    <source>
        <dbReference type="PROSITE-ProRule" id="PRU10042"/>
    </source>
</evidence>
<evidence type="ECO:0000256" key="5">
    <source>
        <dbReference type="SAM" id="MobiDB-lite"/>
    </source>
</evidence>
<evidence type="ECO:0000269" key="6">
    <source>
    </source>
</evidence>
<evidence type="ECO:0000269" key="7">
    <source>
    </source>
</evidence>
<evidence type="ECO:0000305" key="8"/>